<reference key="1">
    <citation type="journal article" date="2001" name="Proc. Natl. Acad. Sci. U.S.A.">
        <title>The complete genome of the crenarchaeon Sulfolobus solfataricus P2.</title>
        <authorList>
            <person name="She Q."/>
            <person name="Singh R.K."/>
            <person name="Confalonieri F."/>
            <person name="Zivanovic Y."/>
            <person name="Allard G."/>
            <person name="Awayez M.J."/>
            <person name="Chan-Weiher C.C.-Y."/>
            <person name="Clausen I.G."/>
            <person name="Curtis B.A."/>
            <person name="De Moors A."/>
            <person name="Erauso G."/>
            <person name="Fletcher C."/>
            <person name="Gordon P.M.K."/>
            <person name="Heikamp-de Jong I."/>
            <person name="Jeffries A.C."/>
            <person name="Kozera C.J."/>
            <person name="Medina N."/>
            <person name="Peng X."/>
            <person name="Thi-Ngoc H.P."/>
            <person name="Redder P."/>
            <person name="Schenk M.E."/>
            <person name="Theriault C."/>
            <person name="Tolstrup N."/>
            <person name="Charlebois R.L."/>
            <person name="Doolittle W.F."/>
            <person name="Duguet M."/>
            <person name="Gaasterland T."/>
            <person name="Garrett R.A."/>
            <person name="Ragan M.A."/>
            <person name="Sensen C.W."/>
            <person name="Van der Oost J."/>
        </authorList>
    </citation>
    <scope>NUCLEOTIDE SEQUENCE [LARGE SCALE GENOMIC DNA]</scope>
    <source>
        <strain>ATCC 35092 / DSM 1617 / JCM 11322 / P2</strain>
    </source>
</reference>
<accession>Q97ZF0</accession>
<gene>
    <name evidence="1" type="primary">top6B</name>
    <name type="ordered locus">SSO0968</name>
</gene>
<keyword id="KW-0067">ATP-binding</keyword>
<keyword id="KW-0238">DNA-binding</keyword>
<keyword id="KW-0413">Isomerase</keyword>
<keyword id="KW-0547">Nucleotide-binding</keyword>
<keyword id="KW-1185">Reference proteome</keyword>
<keyword id="KW-0799">Topoisomerase</keyword>
<comment type="function">
    <text evidence="1">Relaxes both positive and negative superturns and exhibits a strong decatenase activity.</text>
</comment>
<comment type="catalytic activity">
    <reaction evidence="1">
        <text>ATP-dependent breakage, passage and rejoining of double-stranded DNA.</text>
        <dbReference type="EC" id="5.6.2.2"/>
    </reaction>
</comment>
<comment type="subunit">
    <text evidence="1">Homodimer. Heterotetramer of two Top6A and two Top6B chains.</text>
</comment>
<comment type="similarity">
    <text evidence="1">Belongs to the TOP6B family.</text>
</comment>
<sequence length="530" mass="60578">MSAKEKFASLSPAEFFKRNPELAGFPNPARALYQTVRELIENSLDATDVHGILPNIKITIDLIDESRQIYKVNVVDNGIGIPPQEVPNAFGRVLYSSKYVNRQTRGMYGLGVKAAVLYSQMHQDKPIEIETSPVNSKRLYTFKLKIDINKNEPIIVERGSVENNTGFHGTSVAISIPGDWPKAKSRIYEYIKRTYIITPYAEFIFKDPEGNVTYYPRLTNKIPKPPQEVKPHPYGVDREEIKIMINNLKRDYTIKEFLMSEFQSIGDTTADKILELVGLRPNKKVKNLTEEEITRLVETFKKYEDFRSPSADSLSVIGEDLIELGLKKIFNPDFTASITRKPKAYQGHPFIVEAGIAFGGSIPVGEEPIVLRYANKIPLIYDEKSDVIWKVVEELDWKRYGIESDQYQMVVMVHLCSTKIPYKSAGKESIAEVEDIEKEIKNALMEVARKLKLYLSEKRKEQEAKKKLLAYLKYVPEVSRSLAIFLASGNKELVPKYQGEIVEGLFKLISKKLDLINIEEYRKVYKVDSE</sequence>
<name>TOP6B_SACS2</name>
<protein>
    <recommendedName>
        <fullName evidence="1">Type 2 DNA topoisomerase 6 subunit B</fullName>
        <ecNumber evidence="1">5.6.2.2</ecNumber>
    </recommendedName>
    <alternativeName>
        <fullName evidence="1">Type II DNA topoisomerase VI subunit B</fullName>
        <shortName evidence="1">TopoVI-B</shortName>
    </alternativeName>
</protein>
<proteinExistence type="inferred from homology"/>
<feature type="chain" id="PRO_0000145471" description="Type 2 DNA topoisomerase 6 subunit B">
    <location>
        <begin position="1"/>
        <end position="530"/>
    </location>
</feature>
<feature type="binding site" evidence="1">
    <location>
        <position position="42"/>
    </location>
    <ligand>
        <name>ATP</name>
        <dbReference type="ChEBI" id="CHEBI:30616"/>
    </ligand>
</feature>
<feature type="binding site" evidence="1">
    <location>
        <position position="76"/>
    </location>
    <ligand>
        <name>ATP</name>
        <dbReference type="ChEBI" id="CHEBI:30616"/>
    </ligand>
</feature>
<feature type="binding site" evidence="1">
    <location>
        <begin position="97"/>
        <end position="98"/>
    </location>
    <ligand>
        <name>ATP</name>
        <dbReference type="ChEBI" id="CHEBI:30616"/>
    </ligand>
</feature>
<feature type="binding site" evidence="1">
    <location>
        <begin position="106"/>
        <end position="113"/>
    </location>
    <ligand>
        <name>ATP</name>
        <dbReference type="ChEBI" id="CHEBI:30616"/>
    </ligand>
</feature>
<feature type="binding site" evidence="1">
    <location>
        <position position="427"/>
    </location>
    <ligand>
        <name>ATP</name>
        <dbReference type="ChEBI" id="CHEBI:30616"/>
    </ligand>
</feature>
<dbReference type="EC" id="5.6.2.2" evidence="1"/>
<dbReference type="EMBL" id="AE006641">
    <property type="protein sequence ID" value="AAK41242.1"/>
    <property type="molecule type" value="Genomic_DNA"/>
</dbReference>
<dbReference type="PIR" id="C90248">
    <property type="entry name" value="C90248"/>
</dbReference>
<dbReference type="RefSeq" id="WP_009992415.1">
    <property type="nucleotide sequence ID" value="NC_002754.1"/>
</dbReference>
<dbReference type="SMR" id="Q97ZF0"/>
<dbReference type="FunCoup" id="Q97ZF0">
    <property type="interactions" value="22"/>
</dbReference>
<dbReference type="STRING" id="273057.SSO0968"/>
<dbReference type="PaxDb" id="273057-SSO0968"/>
<dbReference type="EnsemblBacteria" id="AAK41242">
    <property type="protein sequence ID" value="AAK41242"/>
    <property type="gene ID" value="SSO0968"/>
</dbReference>
<dbReference type="KEGG" id="sso:SSO0968"/>
<dbReference type="PATRIC" id="fig|273057.12.peg.967"/>
<dbReference type="eggNOG" id="arCOG01165">
    <property type="taxonomic scope" value="Archaea"/>
</dbReference>
<dbReference type="HOGENOM" id="CLU_006403_0_0_2"/>
<dbReference type="InParanoid" id="Q97ZF0"/>
<dbReference type="PhylomeDB" id="Q97ZF0"/>
<dbReference type="Proteomes" id="UP000001974">
    <property type="component" value="Chromosome"/>
</dbReference>
<dbReference type="GO" id="GO:0005829">
    <property type="term" value="C:cytosol"/>
    <property type="evidence" value="ECO:0000318"/>
    <property type="project" value="GO_Central"/>
</dbReference>
<dbReference type="GO" id="GO:0015935">
    <property type="term" value="C:small ribosomal subunit"/>
    <property type="evidence" value="ECO:0000318"/>
    <property type="project" value="GO_Central"/>
</dbReference>
<dbReference type="GO" id="GO:0005524">
    <property type="term" value="F:ATP binding"/>
    <property type="evidence" value="ECO:0007669"/>
    <property type="project" value="UniProtKB-UniRule"/>
</dbReference>
<dbReference type="GO" id="GO:0003677">
    <property type="term" value="F:DNA binding"/>
    <property type="evidence" value="ECO:0007669"/>
    <property type="project" value="UniProtKB-UniRule"/>
</dbReference>
<dbReference type="GO" id="GO:0003918">
    <property type="term" value="F:DNA topoisomerase type II (double strand cut, ATP-hydrolyzing) activity"/>
    <property type="evidence" value="ECO:0007669"/>
    <property type="project" value="UniProtKB-UniRule"/>
</dbReference>
<dbReference type="GO" id="GO:0006265">
    <property type="term" value="P:DNA topological change"/>
    <property type="evidence" value="ECO:0007669"/>
    <property type="project" value="UniProtKB-UniRule"/>
</dbReference>
<dbReference type="CDD" id="cd16933">
    <property type="entry name" value="HATPase_TopVIB-like"/>
    <property type="match status" value="1"/>
</dbReference>
<dbReference type="CDD" id="cd00823">
    <property type="entry name" value="TopoIIB_Trans"/>
    <property type="match status" value="1"/>
</dbReference>
<dbReference type="FunFam" id="1.10.8.50:FF:000014">
    <property type="entry name" value="Type 2 DNA topoisomerase 6 subunit B"/>
    <property type="match status" value="1"/>
</dbReference>
<dbReference type="FunFam" id="3.30.230.10:FF:000091">
    <property type="entry name" value="Type 2 DNA topoisomerase 6 subunit B"/>
    <property type="match status" value="1"/>
</dbReference>
<dbReference type="FunFam" id="3.30.565.10:FF:000062">
    <property type="entry name" value="Type 2 DNA topoisomerase 6 subunit B"/>
    <property type="match status" value="1"/>
</dbReference>
<dbReference type="Gene3D" id="1.10.8.50">
    <property type="match status" value="1"/>
</dbReference>
<dbReference type="Gene3D" id="3.30.230.10">
    <property type="match status" value="1"/>
</dbReference>
<dbReference type="Gene3D" id="3.30.565.10">
    <property type="entry name" value="Histidine kinase-like ATPase, C-terminal domain"/>
    <property type="match status" value="1"/>
</dbReference>
<dbReference type="HAMAP" id="MF_00322">
    <property type="entry name" value="Top6B"/>
    <property type="match status" value="1"/>
</dbReference>
<dbReference type="InterPro" id="IPR036890">
    <property type="entry name" value="HATPase_C_sf"/>
</dbReference>
<dbReference type="InterPro" id="IPR020568">
    <property type="entry name" value="Ribosomal_Su5_D2-typ_SF"/>
</dbReference>
<dbReference type="InterPro" id="IPR010979">
    <property type="entry name" value="Ribosomal_uS13-like_H2TH"/>
</dbReference>
<dbReference type="InterPro" id="IPR014721">
    <property type="entry name" value="Ribsml_uS5_D2-typ_fold_subgr"/>
</dbReference>
<dbReference type="InterPro" id="IPR005734">
    <property type="entry name" value="TopoVI_B"/>
</dbReference>
<dbReference type="InterPro" id="IPR015320">
    <property type="entry name" value="TopoVI_B_transducer"/>
</dbReference>
<dbReference type="NCBIfam" id="NF003218">
    <property type="entry name" value="PRK04184.1"/>
    <property type="match status" value="1"/>
</dbReference>
<dbReference type="NCBIfam" id="TIGR01052">
    <property type="entry name" value="top6b"/>
    <property type="match status" value="1"/>
</dbReference>
<dbReference type="PANTHER" id="PTHR48444">
    <property type="entry name" value="DNA TOPOISOMERASE 6 SUBUNIT B"/>
    <property type="match status" value="1"/>
</dbReference>
<dbReference type="PANTHER" id="PTHR48444:SF1">
    <property type="entry name" value="DNA TOPOISOMERASE 6 SUBUNIT B"/>
    <property type="match status" value="1"/>
</dbReference>
<dbReference type="Pfam" id="PF02518">
    <property type="entry name" value="HATPase_c"/>
    <property type="match status" value="1"/>
</dbReference>
<dbReference type="Pfam" id="PF09239">
    <property type="entry name" value="Topo-VIb_trans"/>
    <property type="match status" value="1"/>
</dbReference>
<dbReference type="PIRSF" id="PIRSF006553">
    <property type="entry name" value="TopoVI_B"/>
    <property type="match status" value="1"/>
</dbReference>
<dbReference type="SMART" id="SM00387">
    <property type="entry name" value="HATPase_c"/>
    <property type="match status" value="1"/>
</dbReference>
<dbReference type="SUPFAM" id="SSF55874">
    <property type="entry name" value="ATPase domain of HSP90 chaperone/DNA topoisomerase II/histidine kinase"/>
    <property type="match status" value="1"/>
</dbReference>
<dbReference type="SUPFAM" id="SSF54211">
    <property type="entry name" value="Ribosomal protein S5 domain 2-like"/>
    <property type="match status" value="1"/>
</dbReference>
<dbReference type="SUPFAM" id="SSF46946">
    <property type="entry name" value="S13-like H2TH domain"/>
    <property type="match status" value="1"/>
</dbReference>
<evidence type="ECO:0000255" key="1">
    <source>
        <dbReference type="HAMAP-Rule" id="MF_00322"/>
    </source>
</evidence>
<organism>
    <name type="scientific">Saccharolobus solfataricus (strain ATCC 35092 / DSM 1617 / JCM 11322 / P2)</name>
    <name type="common">Sulfolobus solfataricus</name>
    <dbReference type="NCBI Taxonomy" id="273057"/>
    <lineage>
        <taxon>Archaea</taxon>
        <taxon>Thermoproteota</taxon>
        <taxon>Thermoprotei</taxon>
        <taxon>Sulfolobales</taxon>
        <taxon>Sulfolobaceae</taxon>
        <taxon>Saccharolobus</taxon>
    </lineage>
</organism>